<evidence type="ECO:0000255" key="1">
    <source>
        <dbReference type="HAMAP-Rule" id="MF_03008"/>
    </source>
</evidence>
<feature type="chain" id="PRO_0000365370" description="Eukaryotic translation initiation factor 3 subunit I">
    <location>
        <begin position="1"/>
        <end position="340"/>
    </location>
</feature>
<feature type="repeat" description="WD 1">
    <location>
        <begin position="8"/>
        <end position="47"/>
    </location>
</feature>
<feature type="repeat" description="WD 2">
    <location>
        <begin position="50"/>
        <end position="91"/>
    </location>
</feature>
<feature type="repeat" description="WD 3">
    <location>
        <begin position="150"/>
        <end position="189"/>
    </location>
</feature>
<feature type="repeat" description="WD 4">
    <location>
        <begin position="194"/>
        <end position="233"/>
    </location>
</feature>
<feature type="repeat" description="WD 5">
    <location>
        <begin position="291"/>
        <end position="330"/>
    </location>
</feature>
<protein>
    <recommendedName>
        <fullName evidence="1">Eukaryotic translation initiation factor 3 subunit I</fullName>
        <shortName evidence="1">eIF3i</shortName>
    </recommendedName>
    <alternativeName>
        <fullName evidence="1">Eukaryotic translation initiation factor 3 39 kDa subunit homolog</fullName>
        <shortName evidence="1">eIF-3 39 kDa subunit homolog</shortName>
    </alternativeName>
</protein>
<organism>
    <name type="scientific">Neosartorya fischeri (strain ATCC 1020 / DSM 3700 / CBS 544.65 / FGSC A1164 / JCM 1740 / NRRL 181 / WB 181)</name>
    <name type="common">Aspergillus fischerianus</name>
    <dbReference type="NCBI Taxonomy" id="331117"/>
    <lineage>
        <taxon>Eukaryota</taxon>
        <taxon>Fungi</taxon>
        <taxon>Dikarya</taxon>
        <taxon>Ascomycota</taxon>
        <taxon>Pezizomycotina</taxon>
        <taxon>Eurotiomycetes</taxon>
        <taxon>Eurotiomycetidae</taxon>
        <taxon>Eurotiales</taxon>
        <taxon>Aspergillaceae</taxon>
        <taxon>Aspergillus</taxon>
        <taxon>Aspergillus subgen. Fumigati</taxon>
    </lineage>
</organism>
<reference key="1">
    <citation type="journal article" date="2008" name="PLoS Genet.">
        <title>Genomic islands in the pathogenic filamentous fungus Aspergillus fumigatus.</title>
        <authorList>
            <person name="Fedorova N.D."/>
            <person name="Khaldi N."/>
            <person name="Joardar V.S."/>
            <person name="Maiti R."/>
            <person name="Amedeo P."/>
            <person name="Anderson M.J."/>
            <person name="Crabtree J."/>
            <person name="Silva J.C."/>
            <person name="Badger J.H."/>
            <person name="Albarraq A."/>
            <person name="Angiuoli S."/>
            <person name="Bussey H."/>
            <person name="Bowyer P."/>
            <person name="Cotty P.J."/>
            <person name="Dyer P.S."/>
            <person name="Egan A."/>
            <person name="Galens K."/>
            <person name="Fraser-Liggett C.M."/>
            <person name="Haas B.J."/>
            <person name="Inman J.M."/>
            <person name="Kent R."/>
            <person name="Lemieux S."/>
            <person name="Malavazi I."/>
            <person name="Orvis J."/>
            <person name="Roemer T."/>
            <person name="Ronning C.M."/>
            <person name="Sundaram J.P."/>
            <person name="Sutton G."/>
            <person name="Turner G."/>
            <person name="Venter J.C."/>
            <person name="White O.R."/>
            <person name="Whitty B.R."/>
            <person name="Youngman P."/>
            <person name="Wolfe K.H."/>
            <person name="Goldman G.H."/>
            <person name="Wortman J.R."/>
            <person name="Jiang B."/>
            <person name="Denning D.W."/>
            <person name="Nierman W.C."/>
        </authorList>
    </citation>
    <scope>NUCLEOTIDE SEQUENCE [LARGE SCALE GENOMIC DNA]</scope>
    <source>
        <strain>ATCC 1020 / DSM 3700 / CBS 544.65 / FGSC A1164 / JCM 1740 / NRRL 181 / WB 181</strain>
    </source>
</reference>
<name>EIF3I_NEOFI</name>
<accession>A1D7I5</accession>
<proteinExistence type="inferred from homology"/>
<gene>
    <name type="primary">tif34</name>
    <name type="ORF">NFIA_068480</name>
</gene>
<dbReference type="EMBL" id="DS027690">
    <property type="protein sequence ID" value="EAW21679.1"/>
    <property type="molecule type" value="Genomic_DNA"/>
</dbReference>
<dbReference type="RefSeq" id="XP_001263576.1">
    <property type="nucleotide sequence ID" value="XM_001263575.1"/>
</dbReference>
<dbReference type="SMR" id="A1D7I5"/>
<dbReference type="STRING" id="331117.A1D7I5"/>
<dbReference type="EnsemblFungi" id="EAW21679">
    <property type="protein sequence ID" value="EAW21679"/>
    <property type="gene ID" value="NFIA_068480"/>
</dbReference>
<dbReference type="GeneID" id="4590222"/>
<dbReference type="KEGG" id="nfi:NFIA_068480"/>
<dbReference type="VEuPathDB" id="FungiDB:NFIA_068480"/>
<dbReference type="eggNOG" id="KOG0643">
    <property type="taxonomic scope" value="Eukaryota"/>
</dbReference>
<dbReference type="HOGENOM" id="CLU_043845_0_1_1"/>
<dbReference type="OMA" id="VWFSHNG"/>
<dbReference type="OrthoDB" id="24966at2759"/>
<dbReference type="Proteomes" id="UP000006702">
    <property type="component" value="Unassembled WGS sequence"/>
</dbReference>
<dbReference type="GO" id="GO:0016282">
    <property type="term" value="C:eukaryotic 43S preinitiation complex"/>
    <property type="evidence" value="ECO:0007669"/>
    <property type="project" value="UniProtKB-UniRule"/>
</dbReference>
<dbReference type="GO" id="GO:0033290">
    <property type="term" value="C:eukaryotic 48S preinitiation complex"/>
    <property type="evidence" value="ECO:0007669"/>
    <property type="project" value="UniProtKB-UniRule"/>
</dbReference>
<dbReference type="GO" id="GO:0071540">
    <property type="term" value="C:eukaryotic translation initiation factor 3 complex, eIF3e"/>
    <property type="evidence" value="ECO:0007669"/>
    <property type="project" value="EnsemblFungi"/>
</dbReference>
<dbReference type="GO" id="GO:0071541">
    <property type="term" value="C:eukaryotic translation initiation factor 3 complex, eIF3m"/>
    <property type="evidence" value="ECO:0007669"/>
    <property type="project" value="EnsemblFungi"/>
</dbReference>
<dbReference type="GO" id="GO:0034399">
    <property type="term" value="C:nuclear periphery"/>
    <property type="evidence" value="ECO:0007669"/>
    <property type="project" value="EnsemblFungi"/>
</dbReference>
<dbReference type="GO" id="GO:0003723">
    <property type="term" value="F:RNA binding"/>
    <property type="evidence" value="ECO:0007669"/>
    <property type="project" value="TreeGrafter"/>
</dbReference>
<dbReference type="GO" id="GO:0003743">
    <property type="term" value="F:translation initiation factor activity"/>
    <property type="evidence" value="ECO:0007669"/>
    <property type="project" value="UniProtKB-UniRule"/>
</dbReference>
<dbReference type="GO" id="GO:0001732">
    <property type="term" value="P:formation of cytoplasmic translation initiation complex"/>
    <property type="evidence" value="ECO:0007669"/>
    <property type="project" value="UniProtKB-UniRule"/>
</dbReference>
<dbReference type="FunFam" id="2.130.10.10:FF:000127">
    <property type="entry name" value="Eukaryotic translation initiation factor 3 subunit I"/>
    <property type="match status" value="1"/>
</dbReference>
<dbReference type="Gene3D" id="2.130.10.10">
    <property type="entry name" value="YVTN repeat-like/Quinoprotein amine dehydrogenase"/>
    <property type="match status" value="1"/>
</dbReference>
<dbReference type="HAMAP" id="MF_03008">
    <property type="entry name" value="eIF3i"/>
    <property type="match status" value="1"/>
</dbReference>
<dbReference type="InterPro" id="IPR027525">
    <property type="entry name" value="eIF3i"/>
</dbReference>
<dbReference type="InterPro" id="IPR015943">
    <property type="entry name" value="WD40/YVTN_repeat-like_dom_sf"/>
</dbReference>
<dbReference type="InterPro" id="IPR019775">
    <property type="entry name" value="WD40_repeat_CS"/>
</dbReference>
<dbReference type="InterPro" id="IPR036322">
    <property type="entry name" value="WD40_repeat_dom_sf"/>
</dbReference>
<dbReference type="InterPro" id="IPR001680">
    <property type="entry name" value="WD40_rpt"/>
</dbReference>
<dbReference type="PANTHER" id="PTHR19877">
    <property type="entry name" value="EUKARYOTIC TRANSLATION INITIATION FACTOR 3 SUBUNIT I"/>
    <property type="match status" value="1"/>
</dbReference>
<dbReference type="PANTHER" id="PTHR19877:SF1">
    <property type="entry name" value="EUKARYOTIC TRANSLATION INITIATION FACTOR 3 SUBUNIT I"/>
    <property type="match status" value="1"/>
</dbReference>
<dbReference type="Pfam" id="PF24805">
    <property type="entry name" value="EIF3I"/>
    <property type="match status" value="1"/>
</dbReference>
<dbReference type="SMART" id="SM00320">
    <property type="entry name" value="WD40"/>
    <property type="match status" value="6"/>
</dbReference>
<dbReference type="SUPFAM" id="SSF50978">
    <property type="entry name" value="WD40 repeat-like"/>
    <property type="match status" value="1"/>
</dbReference>
<dbReference type="PROSITE" id="PS00678">
    <property type="entry name" value="WD_REPEATS_1"/>
    <property type="match status" value="1"/>
</dbReference>
<dbReference type="PROSITE" id="PS50082">
    <property type="entry name" value="WD_REPEATS_2"/>
    <property type="match status" value="3"/>
</dbReference>
<dbReference type="PROSITE" id="PS50294">
    <property type="entry name" value="WD_REPEATS_REGION"/>
    <property type="match status" value="2"/>
</dbReference>
<sequence length="340" mass="37757">MRPILLSGHERSLNQIKFNRDGDLLFSVAKDKIVCAWWSANGERLGTYSGHQGAIWTVDVSPNTVLLATGSADNTVRLWNVKTGECVKVWDFPTAVKRVEFNPDGSRLLAVTEKRMGFLGTIAVLDISYGDSQGGALENQADEPSLRITCTESKATVAGWSYLGKYIIAGHEDGSVSQYDGKTGEQLENVQAHEFDHQINDIQFSQDRTYFITASKDKSAKLISSRNLAILKTYVADTPLNSATITPKKDYVILGGGQAAMDVTTTSARQGKFEARFYHKVFEDEIGRVRGHFGPLNTVDVHPNGTAYASGGEDGYVRVHHFDKPYFDFMYEVEREQLRK</sequence>
<keyword id="KW-0963">Cytoplasm</keyword>
<keyword id="KW-0396">Initiation factor</keyword>
<keyword id="KW-0648">Protein biosynthesis</keyword>
<keyword id="KW-1185">Reference proteome</keyword>
<keyword id="KW-0677">Repeat</keyword>
<keyword id="KW-0853">WD repeat</keyword>
<comment type="function">
    <text evidence="1">Component of the eukaryotic translation initiation factor 3 (eIF-3) complex, which is involved in protein synthesis of a specialized repertoire of mRNAs and, together with other initiation factors, stimulates binding of mRNA and methionyl-tRNAi to the 40S ribosome. The eIF-3 complex specifically targets and initiates translation of a subset of mRNAs involved in cell proliferation.</text>
</comment>
<comment type="subunit">
    <text evidence="1">Component of the eukaryotic translation initiation factor 3 (eIF-3) complex.</text>
</comment>
<comment type="subcellular location">
    <subcellularLocation>
        <location evidence="1">Cytoplasm</location>
    </subcellularLocation>
</comment>
<comment type="similarity">
    <text evidence="1">Belongs to the eIF-3 subunit I family.</text>
</comment>